<accession>Q9BDB7</accession>
<accession>Q8SP46</accession>
<sequence length="447" mass="49680">MKVTARLTWIEEKILEKLLGNASLTLLYQSSAHKNCVSEMTQKYSLQGSTMTVFHLEKDVVVGVFILENFPRLVSEKPCTCAWFSLKRNNSSGISALFLNTKVIVDSEELIIFSLDGLSLSVTPLRGFTLALNDTVMNGLELNLGHGFLPVECEIFRVDGIKKNPSFIKKMVTAEQHRGKLLSALRAYKPYKDLVSEVRILLVGPVGSGKSSFFNSVKSAFQGHLTRQAIVGSDESSITKQYRVYSIKDGKSGETLPFMLCDSMGLEEGEEAGLCIDDIPHILQGCVPDRYQFNPCEPMKPKHSPHAASPPLKDRIHCVAFVLHINSVNTLSDKMVAKLKKIRKDVVDCGIGYVALLTNVEEYDEVLDDSFANMTETVTSLSQVQNVQKWLNIPIANILMVSNYASERRLEPMKDILVFAALRQMLRAADDALEDLPLEDTGNLAPF</sequence>
<proteinExistence type="evidence at transcript level"/>
<protein>
    <recommendedName>
        <fullName>Interferon-induced protein 44-like</fullName>
    </recommendedName>
    <component>
        <recommendedName>
            <fullName>Minor histocompatibility antigen HA-28</fullName>
            <shortName>HLA-HA28</shortName>
        </recommendedName>
        <alternativeName>
            <fullName>IFL8</fullName>
        </alternativeName>
    </component>
</protein>
<dbReference type="EMBL" id="AF336221">
    <property type="protein sequence ID" value="AAK07660.1"/>
    <property type="status" value="ALT_FRAME"/>
    <property type="molecule type" value="mRNA"/>
</dbReference>
<dbReference type="EMBL" id="BC024930">
    <property type="protein sequence ID" value="AAH24930.1"/>
    <property type="molecule type" value="mRNA"/>
</dbReference>
<dbReference type="RefSeq" id="NP_112735.1">
    <property type="nucleotide sequence ID" value="NM_031367.1"/>
</dbReference>
<dbReference type="FunCoup" id="Q9BDB7">
    <property type="interactions" value="20"/>
</dbReference>
<dbReference type="STRING" id="10090.ENSMUSP00000044765"/>
<dbReference type="iPTMnet" id="Q9BDB7"/>
<dbReference type="PhosphoSitePlus" id="Q9BDB7"/>
<dbReference type="SwissPalm" id="Q9BDB7"/>
<dbReference type="PaxDb" id="10090-ENSMUSP00000044765"/>
<dbReference type="ProteomicsDB" id="267258">
    <molecule id="Q9BDB7-1"/>
</dbReference>
<dbReference type="ProteomicsDB" id="267259">
    <molecule id="Q9BDB7-2"/>
</dbReference>
<dbReference type="DNASU" id="15061"/>
<dbReference type="GeneID" id="15061"/>
<dbReference type="KEGG" id="mmu:15061"/>
<dbReference type="UCSC" id="uc029upc.1">
    <molecule id="Q9BDB7-1"/>
    <property type="organism name" value="mouse"/>
</dbReference>
<dbReference type="AGR" id="MGI:95975"/>
<dbReference type="CTD" id="10964"/>
<dbReference type="MGI" id="MGI:95975">
    <property type="gene designation" value="Ifi44l"/>
</dbReference>
<dbReference type="eggNOG" id="ENOG502QQ57">
    <property type="taxonomic scope" value="Eukaryota"/>
</dbReference>
<dbReference type="InParanoid" id="Q9BDB7"/>
<dbReference type="OrthoDB" id="71585at9989"/>
<dbReference type="PhylomeDB" id="Q9BDB7"/>
<dbReference type="Reactome" id="R-MMU-9909505">
    <property type="pathway name" value="Modulation of host responses by IFN-stimulated genes"/>
</dbReference>
<dbReference type="BioGRID-ORCS" id="15061">
    <property type="hits" value="0 hits in 55 CRISPR screens"/>
</dbReference>
<dbReference type="PRO" id="PR:Q9BDB7"/>
<dbReference type="Proteomes" id="UP000000589">
    <property type="component" value="Unplaced"/>
</dbReference>
<dbReference type="RNAct" id="Q9BDB7">
    <property type="molecule type" value="protein"/>
</dbReference>
<dbReference type="GO" id="GO:0005737">
    <property type="term" value="C:cytoplasm"/>
    <property type="evidence" value="ECO:0007669"/>
    <property type="project" value="UniProtKB-SubCell"/>
</dbReference>
<dbReference type="GO" id="GO:0098586">
    <property type="term" value="P:cellular response to virus"/>
    <property type="evidence" value="ECO:0000314"/>
    <property type="project" value="MGI"/>
</dbReference>
<dbReference type="GO" id="GO:0006955">
    <property type="term" value="P:immune response"/>
    <property type="evidence" value="ECO:0000314"/>
    <property type="project" value="MGI"/>
</dbReference>
<dbReference type="CDD" id="cd00882">
    <property type="entry name" value="Ras_like_GTPase"/>
    <property type="match status" value="1"/>
</dbReference>
<dbReference type="FunFam" id="3.40.50.300:FF:001534">
    <property type="entry name" value="Interferon induced protein 44 like"/>
    <property type="match status" value="1"/>
</dbReference>
<dbReference type="Gene3D" id="3.40.50.300">
    <property type="entry name" value="P-loop containing nucleotide triphosphate hydrolases"/>
    <property type="match status" value="1"/>
</dbReference>
<dbReference type="InterPro" id="IPR027417">
    <property type="entry name" value="P-loop_NTPase"/>
</dbReference>
<dbReference type="InterPro" id="IPR006571">
    <property type="entry name" value="TLDc_dom"/>
</dbReference>
<dbReference type="PANTHER" id="PTHR14241">
    <property type="entry name" value="INTERFERON-INDUCED PROTEIN 44"/>
    <property type="match status" value="1"/>
</dbReference>
<dbReference type="PANTHER" id="PTHR14241:SF2">
    <property type="entry name" value="INTERFERON-INDUCED PROTEIN 44-LIKE"/>
    <property type="match status" value="1"/>
</dbReference>
<dbReference type="SUPFAM" id="SSF52540">
    <property type="entry name" value="P-loop containing nucleoside triphosphate hydrolases"/>
    <property type="match status" value="1"/>
</dbReference>
<dbReference type="PROSITE" id="PS51886">
    <property type="entry name" value="TLDC"/>
    <property type="match status" value="1"/>
</dbReference>
<reference key="1">
    <citation type="journal article" date="2000" name="Immunity">
        <title>Differences that matter: major cytotoxic T cell-stimulating minor histocompatibility antigens.</title>
        <authorList>
            <person name="Malarkannan S."/>
            <person name="Horng T."/>
            <person name="Eden P."/>
            <person name="Gonzalez F."/>
            <person name="Shih P."/>
            <person name="Brouwenstijn N."/>
            <person name="Klinge H."/>
            <person name="Christianson G."/>
            <person name="Roopenian D."/>
            <person name="Shastri N."/>
        </authorList>
    </citation>
    <scope>NUCLEOTIDE SEQUENCE [MRNA] (ISOFORM 1)</scope>
    <scope>FUNCTION</scope>
    <scope>SUBCELLULAR LOCATION</scope>
    <scope>TISSUE SPECIFICITY</scope>
    <scope>INDUCTION</scope>
    <source>
        <strain>BALB/c x BALB.B</strain>
        <strain>C57BL/6J</strain>
        <tissue>Spleen</tissue>
    </source>
</reference>
<reference key="2">
    <citation type="journal article" date="2004" name="Genome Res.">
        <title>The status, quality, and expansion of the NIH full-length cDNA project: the Mammalian Gene Collection (MGC).</title>
        <authorList>
            <consortium name="The MGC Project Team"/>
        </authorList>
    </citation>
    <scope>NUCLEOTIDE SEQUENCE [LARGE SCALE MRNA] (ISOFORM 2)</scope>
    <source>
        <strain>Czech II</strain>
        <tissue>Mammary tumor</tissue>
    </source>
</reference>
<reference key="3">
    <citation type="journal article" date="2020" name="J. Virol.">
        <title>Interferon-Induced Protein 44 and Interferon-Induced Protein 44-Like Restrict Replication of Respiratory Syncytial Virus.</title>
        <authorList>
            <person name="Busse D.C."/>
            <person name="Habgood-Coote D."/>
            <person name="Clare S."/>
            <person name="Brandt C."/>
            <person name="Bassano I."/>
            <person name="Kaforou M."/>
            <person name="Herberg J."/>
            <person name="Levin M."/>
            <person name="Eleouet J.F."/>
            <person name="Kellam P."/>
            <person name="Tregoning J.S."/>
        </authorList>
    </citation>
    <scope>FUNCTION</scope>
    <scope>DISRUPTION PHENOTYPE</scope>
    <scope>INDUCTION BY VIRAL INFECTION</scope>
</reference>
<name>IF44L_MOUSE</name>
<organism>
    <name type="scientific">Mus musculus</name>
    <name type="common">Mouse</name>
    <dbReference type="NCBI Taxonomy" id="10090"/>
    <lineage>
        <taxon>Eukaryota</taxon>
        <taxon>Metazoa</taxon>
        <taxon>Chordata</taxon>
        <taxon>Craniata</taxon>
        <taxon>Vertebrata</taxon>
        <taxon>Euteleostomi</taxon>
        <taxon>Mammalia</taxon>
        <taxon>Eutheria</taxon>
        <taxon>Euarchontoglires</taxon>
        <taxon>Glires</taxon>
        <taxon>Rodentia</taxon>
        <taxon>Myomorpha</taxon>
        <taxon>Muroidea</taxon>
        <taxon>Muridae</taxon>
        <taxon>Murinae</taxon>
        <taxon>Mus</taxon>
        <taxon>Mus</taxon>
    </lineage>
</organism>
<comment type="function">
    <text evidence="1 4">Type I interferon-stimulated gene (ISG) that plays a critical role in antiviral and antibacterial activity. During bacterial infection, promotes macrophage differentiation and facilitates inflammatory cytokine secretion (By similarity). Plays a role in the control of respiratory syncycial virus/RSV infection, reducing the ability of the virus to replicate (PubMed:32611756). Acts as a feedback regulator of IFN responses by negatively regulating IKBKB kinase activity through interaction with FKBP5 (By similarity).</text>
</comment>
<comment type="function">
    <text evidence="3">Precursor of the histocompatibility antigen HA-28 in BALB.B mice. More generally, minor histocompatibility antigens refer to immunogenic peptide which, when complexed with MHC, can generate an immune response after recognition by specific T-cells. The peptides are derived from polymorphic intracellular proteins, which are cleaved by normal pathways of antigen processing. The binding of these peptides to MHC molecules and its expression on the cell surface can stimulate T-cell responses and thereby trigger graft rejection or graft-versus-host disease (GVHD). More specifically, HA-28 minor antigen is transcribed in the BALB.B donor but not in host C57BL/6 cells. HA-28 is presented to the donor BALB.B cell surface by Kb MHC. This complex HA-28/Kb MHC elicits cytotoxic T-cell response in C57BL/6 mice immunized with BALB.B spleen cells. It induces C57BL/6 mice cells recognition and lysis by CD8 T-cell from BALB.B mice.</text>
</comment>
<comment type="subunit">
    <text evidence="1">HA-28 antigen forms a complex with Kb MHC in BALB.B donor cells. Interacts with FKBP5; this interaction modulates IKBKB and IKBKE kinase activities (By similarity).</text>
</comment>
<comment type="subcellular location">
    <subcellularLocation>
        <location evidence="3">Cytoplasm</location>
    </subcellularLocation>
</comment>
<comment type="alternative products">
    <event type="alternative splicing"/>
    <isoform>
        <id>Q9BDB7-1</id>
        <name>1</name>
        <sequence type="displayed"/>
    </isoform>
    <isoform>
        <id>Q9BDB7-2</id>
        <name>2</name>
        <sequence type="described" ref="VSP_034010"/>
    </isoform>
</comment>
<comment type="tissue specificity">
    <text evidence="3">Expressed on cells of the hematopoietic lineage. Detected in transformed cell lines of the macrophage and B-cell lineage. Expressed in spleen and bone marrow.</text>
</comment>
<comment type="induction">
    <text evidence="3 4">By respiratory syncytial virus/RSV (PubMed:32611756). HA-28 antigen is expressed after induction by inflammatory cytokines.</text>
</comment>
<comment type="disruption phenotype">
    <text evidence="4">Deletion mutants result in elevated respiratory syncycial virus/RSV infection in vitro.</text>
</comment>
<comment type="similarity">
    <text evidence="6">Belongs to the IFI44 family.</text>
</comment>
<comment type="sequence caution" evidence="6">
    <conflict type="frameshift">
        <sequence resource="EMBL-CDS" id="AAK07660"/>
    </conflict>
</comment>
<keyword id="KW-0025">Alternative splicing</keyword>
<keyword id="KW-0963">Cytoplasm</keyword>
<keyword id="KW-1185">Reference proteome</keyword>
<feature type="chain" id="PRO_0000337846" description="Interferon-induced protein 44-like">
    <location>
        <begin position="1"/>
        <end position="447"/>
    </location>
</feature>
<feature type="peptide" id="PRO_0000342087" description="Minor histocompatibility antigen HA-28">
    <location>
        <begin position="66"/>
        <end position="73"/>
    </location>
</feature>
<feature type="domain" description="TLDc" evidence="2">
    <location>
        <begin position="1"/>
        <end position="159"/>
    </location>
</feature>
<feature type="splice variant" id="VSP_034010" description="In isoform 2." evidence="5">
    <location>
        <begin position="242"/>
        <end position="292"/>
    </location>
</feature>
<feature type="sequence conflict" description="In Ref. 2; AAH24930." evidence="6" ref="2">
    <original>E</original>
    <variation>D</variation>
    <location>
        <position position="109"/>
    </location>
</feature>
<feature type="sequence conflict" description="In Ref. 2; AAH24930." evidence="6" ref="2">
    <original>P</original>
    <variation>L</variation>
    <location>
        <position position="150"/>
    </location>
</feature>
<feature type="sequence conflict" description="In Ref. 2; AAH24930." evidence="6" ref="2">
    <original>H</original>
    <variation>D</variation>
    <location>
        <position position="324"/>
    </location>
</feature>
<feature type="sequence conflict" description="In Ref. 2; AAH24930." evidence="6" ref="2">
    <original>S</original>
    <variation>N</variation>
    <location>
        <position position="370"/>
    </location>
</feature>
<feature type="sequence conflict" description="In Ref. 1; AAK07660." evidence="6" ref="1">
    <original>P</original>
    <variation>L</variation>
    <location>
        <position position="437"/>
    </location>
</feature>
<evidence type="ECO:0000250" key="1">
    <source>
        <dbReference type="UniProtKB" id="Q53G44"/>
    </source>
</evidence>
<evidence type="ECO:0000255" key="2">
    <source>
        <dbReference type="PROSITE-ProRule" id="PRU01234"/>
    </source>
</evidence>
<evidence type="ECO:0000269" key="3">
    <source>
    </source>
</evidence>
<evidence type="ECO:0000269" key="4">
    <source>
    </source>
</evidence>
<evidence type="ECO:0000303" key="5">
    <source>
    </source>
</evidence>
<evidence type="ECO:0000305" key="6"/>
<gene>
    <name type="primary">Ifi44l</name>
    <name type="synonym">H28</name>
</gene>